<name>DCD_SHIF8</name>
<organism>
    <name type="scientific">Shigella flexneri serotype 5b (strain 8401)</name>
    <dbReference type="NCBI Taxonomy" id="373384"/>
    <lineage>
        <taxon>Bacteria</taxon>
        <taxon>Pseudomonadati</taxon>
        <taxon>Pseudomonadota</taxon>
        <taxon>Gammaproteobacteria</taxon>
        <taxon>Enterobacterales</taxon>
        <taxon>Enterobacteriaceae</taxon>
        <taxon>Shigella</taxon>
    </lineage>
</organism>
<dbReference type="EC" id="3.5.4.13" evidence="1"/>
<dbReference type="EMBL" id="CP000266">
    <property type="protein sequence ID" value="ABF04249.1"/>
    <property type="molecule type" value="Genomic_DNA"/>
</dbReference>
<dbReference type="RefSeq" id="WP_001234767.1">
    <property type="nucleotide sequence ID" value="NC_008258.1"/>
</dbReference>
<dbReference type="SMR" id="Q0T366"/>
<dbReference type="GeneID" id="93775126"/>
<dbReference type="KEGG" id="sfv:SFV_2124"/>
<dbReference type="HOGENOM" id="CLU_087476_2_0_6"/>
<dbReference type="UniPathway" id="UPA00610">
    <property type="reaction ID" value="UER00665"/>
</dbReference>
<dbReference type="Proteomes" id="UP000000659">
    <property type="component" value="Chromosome"/>
</dbReference>
<dbReference type="GO" id="GO:0008829">
    <property type="term" value="F:dCTP deaminase activity"/>
    <property type="evidence" value="ECO:0007669"/>
    <property type="project" value="UniProtKB-UniRule"/>
</dbReference>
<dbReference type="GO" id="GO:0000166">
    <property type="term" value="F:nucleotide binding"/>
    <property type="evidence" value="ECO:0007669"/>
    <property type="project" value="UniProtKB-KW"/>
</dbReference>
<dbReference type="GO" id="GO:0006226">
    <property type="term" value="P:dUMP biosynthetic process"/>
    <property type="evidence" value="ECO:0007669"/>
    <property type="project" value="UniProtKB-UniPathway"/>
</dbReference>
<dbReference type="GO" id="GO:0006229">
    <property type="term" value="P:dUTP biosynthetic process"/>
    <property type="evidence" value="ECO:0007669"/>
    <property type="project" value="UniProtKB-UniRule"/>
</dbReference>
<dbReference type="GO" id="GO:0015949">
    <property type="term" value="P:nucleobase-containing small molecule interconversion"/>
    <property type="evidence" value="ECO:0007669"/>
    <property type="project" value="TreeGrafter"/>
</dbReference>
<dbReference type="CDD" id="cd07557">
    <property type="entry name" value="trimeric_dUTPase"/>
    <property type="match status" value="1"/>
</dbReference>
<dbReference type="FunFam" id="2.70.40.10:FF:000003">
    <property type="entry name" value="dCTP deaminase"/>
    <property type="match status" value="1"/>
</dbReference>
<dbReference type="Gene3D" id="2.70.40.10">
    <property type="match status" value="1"/>
</dbReference>
<dbReference type="HAMAP" id="MF_00146">
    <property type="entry name" value="dCTP_deaminase"/>
    <property type="match status" value="1"/>
</dbReference>
<dbReference type="InterPro" id="IPR011962">
    <property type="entry name" value="dCTP_deaminase"/>
</dbReference>
<dbReference type="InterPro" id="IPR036157">
    <property type="entry name" value="dUTPase-like_sf"/>
</dbReference>
<dbReference type="InterPro" id="IPR033704">
    <property type="entry name" value="dUTPase_trimeric"/>
</dbReference>
<dbReference type="NCBIfam" id="TIGR02274">
    <property type="entry name" value="dCTP_deam"/>
    <property type="match status" value="1"/>
</dbReference>
<dbReference type="PANTHER" id="PTHR42680">
    <property type="entry name" value="DCTP DEAMINASE"/>
    <property type="match status" value="1"/>
</dbReference>
<dbReference type="PANTHER" id="PTHR42680:SF3">
    <property type="entry name" value="DCTP DEAMINASE"/>
    <property type="match status" value="1"/>
</dbReference>
<dbReference type="Pfam" id="PF22769">
    <property type="entry name" value="DCD"/>
    <property type="match status" value="1"/>
</dbReference>
<dbReference type="SUPFAM" id="SSF51283">
    <property type="entry name" value="dUTPase-like"/>
    <property type="match status" value="1"/>
</dbReference>
<gene>
    <name evidence="1" type="primary">dcd</name>
    <name type="ordered locus">SFV_2124</name>
</gene>
<feature type="chain" id="PRO_1000009818" description="dCTP deaminase">
    <location>
        <begin position="1"/>
        <end position="193"/>
    </location>
</feature>
<feature type="region of interest" description="Disordered" evidence="2">
    <location>
        <begin position="169"/>
        <end position="193"/>
    </location>
</feature>
<feature type="active site" description="Proton donor/acceptor" evidence="1">
    <location>
        <position position="138"/>
    </location>
</feature>
<feature type="binding site" evidence="1">
    <location>
        <begin position="110"/>
        <end position="115"/>
    </location>
    <ligand>
        <name>dCTP</name>
        <dbReference type="ChEBI" id="CHEBI:61481"/>
    </ligand>
</feature>
<feature type="binding site" evidence="1">
    <location>
        <position position="128"/>
    </location>
    <ligand>
        <name>dCTP</name>
        <dbReference type="ChEBI" id="CHEBI:61481"/>
    </ligand>
</feature>
<feature type="binding site" evidence="1">
    <location>
        <begin position="136"/>
        <end position="138"/>
    </location>
    <ligand>
        <name>dCTP</name>
        <dbReference type="ChEBI" id="CHEBI:61481"/>
    </ligand>
</feature>
<feature type="binding site" evidence="1">
    <location>
        <position position="171"/>
    </location>
    <ligand>
        <name>dCTP</name>
        <dbReference type="ChEBI" id="CHEBI:61481"/>
    </ligand>
</feature>
<feature type="binding site" evidence="1">
    <location>
        <position position="178"/>
    </location>
    <ligand>
        <name>dCTP</name>
        <dbReference type="ChEBI" id="CHEBI:61481"/>
    </ligand>
</feature>
<feature type="binding site" evidence="1">
    <location>
        <position position="182"/>
    </location>
    <ligand>
        <name>dCTP</name>
        <dbReference type="ChEBI" id="CHEBI:61481"/>
    </ligand>
</feature>
<keyword id="KW-0378">Hydrolase</keyword>
<keyword id="KW-0546">Nucleotide metabolism</keyword>
<keyword id="KW-0547">Nucleotide-binding</keyword>
<comment type="function">
    <text evidence="1">Catalyzes the deamination of dCTP to dUTP.</text>
</comment>
<comment type="catalytic activity">
    <reaction evidence="1">
        <text>dCTP + H2O + H(+) = dUTP + NH4(+)</text>
        <dbReference type="Rhea" id="RHEA:22680"/>
        <dbReference type="ChEBI" id="CHEBI:15377"/>
        <dbReference type="ChEBI" id="CHEBI:15378"/>
        <dbReference type="ChEBI" id="CHEBI:28938"/>
        <dbReference type="ChEBI" id="CHEBI:61481"/>
        <dbReference type="ChEBI" id="CHEBI:61555"/>
        <dbReference type="EC" id="3.5.4.13"/>
    </reaction>
</comment>
<comment type="pathway">
    <text evidence="1">Pyrimidine metabolism; dUMP biosynthesis; dUMP from dCTP (dUTP route): step 1/2.</text>
</comment>
<comment type="subunit">
    <text evidence="1">Homotrimer.</text>
</comment>
<comment type="similarity">
    <text evidence="1">Belongs to the dCTP deaminase family.</text>
</comment>
<protein>
    <recommendedName>
        <fullName evidence="1">dCTP deaminase</fullName>
        <ecNumber evidence="1">3.5.4.13</ecNumber>
    </recommendedName>
    <alternativeName>
        <fullName evidence="1">Deoxycytidine triphosphate deaminase</fullName>
    </alternativeName>
</protein>
<evidence type="ECO:0000255" key="1">
    <source>
        <dbReference type="HAMAP-Rule" id="MF_00146"/>
    </source>
</evidence>
<evidence type="ECO:0000256" key="2">
    <source>
        <dbReference type="SAM" id="MobiDB-lite"/>
    </source>
</evidence>
<accession>Q0T366</accession>
<reference key="1">
    <citation type="journal article" date="2006" name="BMC Genomics">
        <title>Complete genome sequence of Shigella flexneri 5b and comparison with Shigella flexneri 2a.</title>
        <authorList>
            <person name="Nie H."/>
            <person name="Yang F."/>
            <person name="Zhang X."/>
            <person name="Yang J."/>
            <person name="Chen L."/>
            <person name="Wang J."/>
            <person name="Xiong Z."/>
            <person name="Peng J."/>
            <person name="Sun L."/>
            <person name="Dong J."/>
            <person name="Xue Y."/>
            <person name="Xu X."/>
            <person name="Chen S."/>
            <person name="Yao Z."/>
            <person name="Shen Y."/>
            <person name="Jin Q."/>
        </authorList>
    </citation>
    <scope>NUCLEOTIDE SEQUENCE [LARGE SCALE GENOMIC DNA]</scope>
    <source>
        <strain>8401</strain>
    </source>
</reference>
<proteinExistence type="inferred from homology"/>
<sequence>MRLCDRDIEAWLDEGRLSINPRPPVERINGATVDVRLGNKFRTFRGHTAAFIDLSGPKDEVSAALDRVMSDEIVLDEGEAFYLHPGELALAVTLESVTLPADLVGWLDGRSSLARLGLMVHVTAHRIDPGWSGCIVLEFYNSGKLPLALRPGMLIGALSFEPLSGPAARPYNRREDAKYRNQQGAVASRIDKD</sequence>